<evidence type="ECO:0000255" key="1">
    <source>
        <dbReference type="HAMAP-Rule" id="MF_00921"/>
    </source>
</evidence>
<name>PDRP_RHOPS</name>
<gene>
    <name type="ordered locus">RPD_0426</name>
</gene>
<comment type="function">
    <text evidence="1">Bifunctional serine/threonine kinase and phosphorylase involved in the regulation of the pyruvate, phosphate dikinase (PPDK) by catalyzing its phosphorylation/dephosphorylation.</text>
</comment>
<comment type="catalytic activity">
    <reaction evidence="1">
        <text>N(tele)-phospho-L-histidyl/L-threonyl-[pyruvate, phosphate dikinase] + ADP = N(tele)-phospho-L-histidyl/O-phospho-L-threonyl-[pyruvate, phosphate dikinase] + AMP + H(+)</text>
        <dbReference type="Rhea" id="RHEA:43692"/>
        <dbReference type="Rhea" id="RHEA-COMP:10650"/>
        <dbReference type="Rhea" id="RHEA-COMP:10651"/>
        <dbReference type="ChEBI" id="CHEBI:15378"/>
        <dbReference type="ChEBI" id="CHEBI:30013"/>
        <dbReference type="ChEBI" id="CHEBI:61977"/>
        <dbReference type="ChEBI" id="CHEBI:83586"/>
        <dbReference type="ChEBI" id="CHEBI:456215"/>
        <dbReference type="ChEBI" id="CHEBI:456216"/>
        <dbReference type="EC" id="2.7.11.32"/>
    </reaction>
</comment>
<comment type="catalytic activity">
    <reaction evidence="1">
        <text>N(tele)-phospho-L-histidyl/O-phospho-L-threonyl-[pyruvate, phosphate dikinase] + phosphate + H(+) = N(tele)-phospho-L-histidyl/L-threonyl-[pyruvate, phosphate dikinase] + diphosphate</text>
        <dbReference type="Rhea" id="RHEA:43696"/>
        <dbReference type="Rhea" id="RHEA-COMP:10650"/>
        <dbReference type="Rhea" id="RHEA-COMP:10651"/>
        <dbReference type="ChEBI" id="CHEBI:15378"/>
        <dbReference type="ChEBI" id="CHEBI:30013"/>
        <dbReference type="ChEBI" id="CHEBI:33019"/>
        <dbReference type="ChEBI" id="CHEBI:43474"/>
        <dbReference type="ChEBI" id="CHEBI:61977"/>
        <dbReference type="ChEBI" id="CHEBI:83586"/>
        <dbReference type="EC" id="2.7.4.27"/>
    </reaction>
</comment>
<comment type="similarity">
    <text evidence="1">Belongs to the pyruvate, phosphate/water dikinase regulatory protein family. PDRP subfamily.</text>
</comment>
<sequence>MLTDGSYFHLHLVSDSTGETLITVSRAVAAQYANVSPVEHVYPLVRSQKQLDRVLQEIEESPGIVLFTLLESELVNRLEAKCQQINSPSLSIIGPVMQLFEAYLGASTTGRVGAQHTLNAEYFKRIDALNYSMMHDDGQHVEGLEEADVVLVGVSRTSKTPTSIYLANRGIRTANVPLVAGIPIPHQLETLKKPLVVSLHASPDRLIQVRQNRLLSLGAGAGNDSYIDRQAVTDEVLLARKLSAKYGWSLLDVTRRSIEETAAAIMKLLADRQRQRMSE</sequence>
<reference key="1">
    <citation type="submission" date="2006-03" db="EMBL/GenBank/DDBJ databases">
        <title>Complete sequence of Rhodopseudomonas palustris BisB5.</title>
        <authorList>
            <consortium name="US DOE Joint Genome Institute"/>
            <person name="Copeland A."/>
            <person name="Lucas S."/>
            <person name="Lapidus A."/>
            <person name="Barry K."/>
            <person name="Detter J.C."/>
            <person name="Glavina del Rio T."/>
            <person name="Hammon N."/>
            <person name="Israni S."/>
            <person name="Dalin E."/>
            <person name="Tice H."/>
            <person name="Pitluck S."/>
            <person name="Chain P."/>
            <person name="Malfatti S."/>
            <person name="Shin M."/>
            <person name="Vergez L."/>
            <person name="Schmutz J."/>
            <person name="Larimer F."/>
            <person name="Land M."/>
            <person name="Hauser L."/>
            <person name="Pelletier D.A."/>
            <person name="Kyrpides N."/>
            <person name="Lykidis A."/>
            <person name="Oda Y."/>
            <person name="Harwood C.S."/>
            <person name="Richardson P."/>
        </authorList>
    </citation>
    <scope>NUCLEOTIDE SEQUENCE [LARGE SCALE GENOMIC DNA]</scope>
    <source>
        <strain>BisB5</strain>
    </source>
</reference>
<feature type="chain" id="PRO_0000316727" description="Putative pyruvate, phosphate dikinase regulatory protein">
    <location>
        <begin position="1"/>
        <end position="279"/>
    </location>
</feature>
<feature type="binding site" evidence="1">
    <location>
        <begin position="153"/>
        <end position="160"/>
    </location>
    <ligand>
        <name>ADP</name>
        <dbReference type="ChEBI" id="CHEBI:456216"/>
    </ligand>
</feature>
<proteinExistence type="inferred from homology"/>
<accession>Q13E25</accession>
<protein>
    <recommendedName>
        <fullName evidence="1">Putative pyruvate, phosphate dikinase regulatory protein</fullName>
        <shortName evidence="1">PPDK regulatory protein</shortName>
        <ecNumber evidence="1">2.7.11.32</ecNumber>
        <ecNumber evidence="1">2.7.4.27</ecNumber>
    </recommendedName>
</protein>
<dbReference type="EC" id="2.7.11.32" evidence="1"/>
<dbReference type="EC" id="2.7.4.27" evidence="1"/>
<dbReference type="EMBL" id="CP000283">
    <property type="protein sequence ID" value="ABE37664.1"/>
    <property type="molecule type" value="Genomic_DNA"/>
</dbReference>
<dbReference type="SMR" id="Q13E25"/>
<dbReference type="STRING" id="316057.RPD_0426"/>
<dbReference type="KEGG" id="rpd:RPD_0426"/>
<dbReference type="eggNOG" id="COG1806">
    <property type="taxonomic scope" value="Bacteria"/>
</dbReference>
<dbReference type="HOGENOM" id="CLU_046206_2_0_5"/>
<dbReference type="BioCyc" id="RPAL316057:RPD_RS02190-MONOMER"/>
<dbReference type="Proteomes" id="UP000001818">
    <property type="component" value="Chromosome"/>
</dbReference>
<dbReference type="GO" id="GO:0043531">
    <property type="term" value="F:ADP binding"/>
    <property type="evidence" value="ECO:0007669"/>
    <property type="project" value="UniProtKB-UniRule"/>
</dbReference>
<dbReference type="GO" id="GO:0005524">
    <property type="term" value="F:ATP binding"/>
    <property type="evidence" value="ECO:0007669"/>
    <property type="project" value="InterPro"/>
</dbReference>
<dbReference type="GO" id="GO:0016776">
    <property type="term" value="F:phosphotransferase activity, phosphate group as acceptor"/>
    <property type="evidence" value="ECO:0007669"/>
    <property type="project" value="UniProtKB-UniRule"/>
</dbReference>
<dbReference type="GO" id="GO:0004674">
    <property type="term" value="F:protein serine/threonine kinase activity"/>
    <property type="evidence" value="ECO:0007669"/>
    <property type="project" value="UniProtKB-UniRule"/>
</dbReference>
<dbReference type="HAMAP" id="MF_00921">
    <property type="entry name" value="PDRP"/>
    <property type="match status" value="1"/>
</dbReference>
<dbReference type="InterPro" id="IPR005177">
    <property type="entry name" value="Kinase-pyrophosphorylase"/>
</dbReference>
<dbReference type="InterPro" id="IPR026565">
    <property type="entry name" value="PPDK_reg"/>
</dbReference>
<dbReference type="NCBIfam" id="NF003742">
    <property type="entry name" value="PRK05339.1"/>
    <property type="match status" value="1"/>
</dbReference>
<dbReference type="PANTHER" id="PTHR31756">
    <property type="entry name" value="PYRUVATE, PHOSPHATE DIKINASE REGULATORY PROTEIN 1, CHLOROPLASTIC"/>
    <property type="match status" value="1"/>
</dbReference>
<dbReference type="PANTHER" id="PTHR31756:SF3">
    <property type="entry name" value="PYRUVATE, PHOSPHATE DIKINASE REGULATORY PROTEIN 1, CHLOROPLASTIC"/>
    <property type="match status" value="1"/>
</dbReference>
<dbReference type="Pfam" id="PF03618">
    <property type="entry name" value="Kinase-PPPase"/>
    <property type="match status" value="1"/>
</dbReference>
<organism>
    <name type="scientific">Rhodopseudomonas palustris (strain BisB5)</name>
    <dbReference type="NCBI Taxonomy" id="316057"/>
    <lineage>
        <taxon>Bacteria</taxon>
        <taxon>Pseudomonadati</taxon>
        <taxon>Pseudomonadota</taxon>
        <taxon>Alphaproteobacteria</taxon>
        <taxon>Hyphomicrobiales</taxon>
        <taxon>Nitrobacteraceae</taxon>
        <taxon>Rhodopseudomonas</taxon>
    </lineage>
</organism>
<keyword id="KW-0418">Kinase</keyword>
<keyword id="KW-0547">Nucleotide-binding</keyword>
<keyword id="KW-0723">Serine/threonine-protein kinase</keyword>
<keyword id="KW-0808">Transferase</keyword>